<evidence type="ECO:0000255" key="1">
    <source>
        <dbReference type="HAMAP-Rule" id="MF_00034"/>
    </source>
</evidence>
<feature type="chain" id="PRO_0000183074" description="Crossover junction endodeoxyribonuclease RuvC">
    <location>
        <begin position="1"/>
        <end position="170"/>
    </location>
</feature>
<feature type="active site" evidence="1">
    <location>
        <position position="11"/>
    </location>
</feature>
<feature type="active site" evidence="1">
    <location>
        <position position="71"/>
    </location>
</feature>
<feature type="active site" evidence="1">
    <location>
        <position position="143"/>
    </location>
</feature>
<feature type="binding site" evidence="1">
    <location>
        <position position="11"/>
    </location>
    <ligand>
        <name>Mg(2+)</name>
        <dbReference type="ChEBI" id="CHEBI:18420"/>
        <label>1</label>
    </ligand>
</feature>
<feature type="binding site" evidence="1">
    <location>
        <position position="71"/>
    </location>
    <ligand>
        <name>Mg(2+)</name>
        <dbReference type="ChEBI" id="CHEBI:18420"/>
        <label>2</label>
    </ligand>
</feature>
<feature type="binding site" evidence="1">
    <location>
        <position position="143"/>
    </location>
    <ligand>
        <name>Mg(2+)</name>
        <dbReference type="ChEBI" id="CHEBI:18420"/>
        <label>1</label>
    </ligand>
</feature>
<protein>
    <recommendedName>
        <fullName evidence="1">Crossover junction endodeoxyribonuclease RuvC</fullName>
        <ecNumber evidence="1">3.1.21.10</ecNumber>
    </recommendedName>
    <alternativeName>
        <fullName evidence="1">Holliday junction nuclease RuvC</fullName>
    </alternativeName>
    <alternativeName>
        <fullName evidence="1">Holliday junction resolvase RuvC</fullName>
    </alternativeName>
</protein>
<sequence length="170" mass="18166">MQKTIRIIGIDPGLRRTGWGVIDTLGNSLRFVASGTVTSDGDMDLASRLCQLHDGLAEIVHSHQPDEAAVEQTFVNKDAVATLKLGQARGIAMLVPARAGLPVFEYAPNAVKKAVIGVGHGEKQQIHMMLKILMPKAEFKGNDAADALAIAICHAHNRGGDRMRRLLAAG</sequence>
<dbReference type="EC" id="3.1.21.10" evidence="1"/>
<dbReference type="EMBL" id="AE007870">
    <property type="protein sequence ID" value="AAK89681.1"/>
    <property type="molecule type" value="Genomic_DNA"/>
</dbReference>
<dbReference type="PIR" id="AH3014">
    <property type="entry name" value="AH3014"/>
</dbReference>
<dbReference type="PIR" id="G98269">
    <property type="entry name" value="G98269"/>
</dbReference>
<dbReference type="RefSeq" id="NP_356896.1">
    <property type="nucleotide sequence ID" value="NC_003063.2"/>
</dbReference>
<dbReference type="RefSeq" id="WP_004445748.1">
    <property type="nucleotide sequence ID" value="NC_003063.2"/>
</dbReference>
<dbReference type="SMR" id="Q8U9K4"/>
<dbReference type="STRING" id="176299.Atu3724"/>
<dbReference type="EnsemblBacteria" id="AAK89681">
    <property type="protein sequence ID" value="AAK89681"/>
    <property type="gene ID" value="Atu3724"/>
</dbReference>
<dbReference type="GeneID" id="61457073"/>
<dbReference type="KEGG" id="atu:Atu3724"/>
<dbReference type="PATRIC" id="fig|176299.10.peg.3557"/>
<dbReference type="eggNOG" id="COG0817">
    <property type="taxonomic scope" value="Bacteria"/>
</dbReference>
<dbReference type="HOGENOM" id="CLU_091257_1_0_5"/>
<dbReference type="OrthoDB" id="9805499at2"/>
<dbReference type="PhylomeDB" id="Q8U9K4"/>
<dbReference type="BioCyc" id="AGRO:ATU3724-MONOMER"/>
<dbReference type="Proteomes" id="UP000000813">
    <property type="component" value="Chromosome linear"/>
</dbReference>
<dbReference type="GO" id="GO:0005737">
    <property type="term" value="C:cytoplasm"/>
    <property type="evidence" value="ECO:0007669"/>
    <property type="project" value="UniProtKB-SubCell"/>
</dbReference>
<dbReference type="GO" id="GO:0048476">
    <property type="term" value="C:Holliday junction resolvase complex"/>
    <property type="evidence" value="ECO:0007669"/>
    <property type="project" value="UniProtKB-UniRule"/>
</dbReference>
<dbReference type="GO" id="GO:0008821">
    <property type="term" value="F:crossover junction DNA endonuclease activity"/>
    <property type="evidence" value="ECO:0007669"/>
    <property type="project" value="UniProtKB-UniRule"/>
</dbReference>
<dbReference type="GO" id="GO:0003677">
    <property type="term" value="F:DNA binding"/>
    <property type="evidence" value="ECO:0007669"/>
    <property type="project" value="UniProtKB-KW"/>
</dbReference>
<dbReference type="GO" id="GO:0000287">
    <property type="term" value="F:magnesium ion binding"/>
    <property type="evidence" value="ECO:0007669"/>
    <property type="project" value="UniProtKB-UniRule"/>
</dbReference>
<dbReference type="GO" id="GO:0006310">
    <property type="term" value="P:DNA recombination"/>
    <property type="evidence" value="ECO:0007669"/>
    <property type="project" value="UniProtKB-UniRule"/>
</dbReference>
<dbReference type="GO" id="GO:0006281">
    <property type="term" value="P:DNA repair"/>
    <property type="evidence" value="ECO:0007669"/>
    <property type="project" value="UniProtKB-UniRule"/>
</dbReference>
<dbReference type="CDD" id="cd16962">
    <property type="entry name" value="RuvC"/>
    <property type="match status" value="1"/>
</dbReference>
<dbReference type="FunFam" id="3.30.420.10:FF:000002">
    <property type="entry name" value="Crossover junction endodeoxyribonuclease RuvC"/>
    <property type="match status" value="1"/>
</dbReference>
<dbReference type="Gene3D" id="3.30.420.10">
    <property type="entry name" value="Ribonuclease H-like superfamily/Ribonuclease H"/>
    <property type="match status" value="1"/>
</dbReference>
<dbReference type="HAMAP" id="MF_00034">
    <property type="entry name" value="RuvC"/>
    <property type="match status" value="1"/>
</dbReference>
<dbReference type="InterPro" id="IPR012337">
    <property type="entry name" value="RNaseH-like_sf"/>
</dbReference>
<dbReference type="InterPro" id="IPR036397">
    <property type="entry name" value="RNaseH_sf"/>
</dbReference>
<dbReference type="InterPro" id="IPR020563">
    <property type="entry name" value="X-over_junc_endoDNase_Mg_BS"/>
</dbReference>
<dbReference type="InterPro" id="IPR002176">
    <property type="entry name" value="X-over_junc_endoDNase_RuvC"/>
</dbReference>
<dbReference type="NCBIfam" id="TIGR00228">
    <property type="entry name" value="ruvC"/>
    <property type="match status" value="1"/>
</dbReference>
<dbReference type="PANTHER" id="PTHR30194">
    <property type="entry name" value="CROSSOVER JUNCTION ENDODEOXYRIBONUCLEASE RUVC"/>
    <property type="match status" value="1"/>
</dbReference>
<dbReference type="PANTHER" id="PTHR30194:SF3">
    <property type="entry name" value="CROSSOVER JUNCTION ENDODEOXYRIBONUCLEASE RUVC"/>
    <property type="match status" value="1"/>
</dbReference>
<dbReference type="Pfam" id="PF02075">
    <property type="entry name" value="RuvC"/>
    <property type="match status" value="1"/>
</dbReference>
<dbReference type="PRINTS" id="PR00696">
    <property type="entry name" value="RSOLVASERUVC"/>
</dbReference>
<dbReference type="SUPFAM" id="SSF53098">
    <property type="entry name" value="Ribonuclease H-like"/>
    <property type="match status" value="1"/>
</dbReference>
<dbReference type="PROSITE" id="PS01321">
    <property type="entry name" value="RUVC"/>
    <property type="match status" value="1"/>
</dbReference>
<keyword id="KW-0963">Cytoplasm</keyword>
<keyword id="KW-0227">DNA damage</keyword>
<keyword id="KW-0233">DNA recombination</keyword>
<keyword id="KW-0234">DNA repair</keyword>
<keyword id="KW-0238">DNA-binding</keyword>
<keyword id="KW-0255">Endonuclease</keyword>
<keyword id="KW-0378">Hydrolase</keyword>
<keyword id="KW-0460">Magnesium</keyword>
<keyword id="KW-0479">Metal-binding</keyword>
<keyword id="KW-0540">Nuclease</keyword>
<keyword id="KW-1185">Reference proteome</keyword>
<proteinExistence type="inferred from homology"/>
<accession>Q8U9K4</accession>
<organism>
    <name type="scientific">Agrobacterium fabrum (strain C58 / ATCC 33970)</name>
    <name type="common">Agrobacterium tumefaciens (strain C58)</name>
    <dbReference type="NCBI Taxonomy" id="176299"/>
    <lineage>
        <taxon>Bacteria</taxon>
        <taxon>Pseudomonadati</taxon>
        <taxon>Pseudomonadota</taxon>
        <taxon>Alphaproteobacteria</taxon>
        <taxon>Hyphomicrobiales</taxon>
        <taxon>Rhizobiaceae</taxon>
        <taxon>Rhizobium/Agrobacterium group</taxon>
        <taxon>Agrobacterium</taxon>
        <taxon>Agrobacterium tumefaciens complex</taxon>
    </lineage>
</organism>
<reference key="1">
    <citation type="journal article" date="2001" name="Science">
        <title>The genome of the natural genetic engineer Agrobacterium tumefaciens C58.</title>
        <authorList>
            <person name="Wood D.W."/>
            <person name="Setubal J.C."/>
            <person name="Kaul R."/>
            <person name="Monks D.E."/>
            <person name="Kitajima J.P."/>
            <person name="Okura V.K."/>
            <person name="Zhou Y."/>
            <person name="Chen L."/>
            <person name="Wood G.E."/>
            <person name="Almeida N.F. Jr."/>
            <person name="Woo L."/>
            <person name="Chen Y."/>
            <person name="Paulsen I.T."/>
            <person name="Eisen J.A."/>
            <person name="Karp P.D."/>
            <person name="Bovee D. Sr."/>
            <person name="Chapman P."/>
            <person name="Clendenning J."/>
            <person name="Deatherage G."/>
            <person name="Gillet W."/>
            <person name="Grant C."/>
            <person name="Kutyavin T."/>
            <person name="Levy R."/>
            <person name="Li M.-J."/>
            <person name="McClelland E."/>
            <person name="Palmieri A."/>
            <person name="Raymond C."/>
            <person name="Rouse G."/>
            <person name="Saenphimmachak C."/>
            <person name="Wu Z."/>
            <person name="Romero P."/>
            <person name="Gordon D."/>
            <person name="Zhang S."/>
            <person name="Yoo H."/>
            <person name="Tao Y."/>
            <person name="Biddle P."/>
            <person name="Jung M."/>
            <person name="Krespan W."/>
            <person name="Perry M."/>
            <person name="Gordon-Kamm B."/>
            <person name="Liao L."/>
            <person name="Kim S."/>
            <person name="Hendrick C."/>
            <person name="Zhao Z.-Y."/>
            <person name="Dolan M."/>
            <person name="Chumley F."/>
            <person name="Tingey S.V."/>
            <person name="Tomb J.-F."/>
            <person name="Gordon M.P."/>
            <person name="Olson M.V."/>
            <person name="Nester E.W."/>
        </authorList>
    </citation>
    <scope>NUCLEOTIDE SEQUENCE [LARGE SCALE GENOMIC DNA]</scope>
    <source>
        <strain>C58 / ATCC 33970</strain>
    </source>
</reference>
<reference key="2">
    <citation type="journal article" date="2001" name="Science">
        <title>Genome sequence of the plant pathogen and biotechnology agent Agrobacterium tumefaciens C58.</title>
        <authorList>
            <person name="Goodner B."/>
            <person name="Hinkle G."/>
            <person name="Gattung S."/>
            <person name="Miller N."/>
            <person name="Blanchard M."/>
            <person name="Qurollo B."/>
            <person name="Goldman B.S."/>
            <person name="Cao Y."/>
            <person name="Askenazi M."/>
            <person name="Halling C."/>
            <person name="Mullin L."/>
            <person name="Houmiel K."/>
            <person name="Gordon J."/>
            <person name="Vaudin M."/>
            <person name="Iartchouk O."/>
            <person name="Epp A."/>
            <person name="Liu F."/>
            <person name="Wollam C."/>
            <person name="Allinger M."/>
            <person name="Doughty D."/>
            <person name="Scott C."/>
            <person name="Lappas C."/>
            <person name="Markelz B."/>
            <person name="Flanagan C."/>
            <person name="Crowell C."/>
            <person name="Gurson J."/>
            <person name="Lomo C."/>
            <person name="Sear C."/>
            <person name="Strub G."/>
            <person name="Cielo C."/>
            <person name="Slater S."/>
        </authorList>
    </citation>
    <scope>NUCLEOTIDE SEQUENCE [LARGE SCALE GENOMIC DNA]</scope>
    <source>
        <strain>C58 / ATCC 33970</strain>
    </source>
</reference>
<gene>
    <name evidence="1" type="primary">ruvC</name>
    <name type="ordered locus">Atu3724</name>
    <name type="ORF">AGR_L_2221</name>
</gene>
<comment type="function">
    <text evidence="1">The RuvA-RuvB-RuvC complex processes Holliday junction (HJ) DNA during genetic recombination and DNA repair. Endonuclease that resolves HJ intermediates. Cleaves cruciform DNA by making single-stranded nicks across the HJ at symmetrical positions within the homologous arms, yielding a 5'-phosphate and a 3'-hydroxyl group; requires a central core of homology in the junction. The consensus cleavage sequence is 5'-(A/T)TT(C/G)-3'. Cleavage occurs on the 3'-side of the TT dinucleotide at the point of strand exchange. HJ branch migration catalyzed by RuvA-RuvB allows RuvC to scan DNA until it finds its consensus sequence, where it cleaves and resolves the cruciform DNA.</text>
</comment>
<comment type="catalytic activity">
    <reaction evidence="1">
        <text>Endonucleolytic cleavage at a junction such as a reciprocal single-stranded crossover between two homologous DNA duplexes (Holliday junction).</text>
        <dbReference type="EC" id="3.1.21.10"/>
    </reaction>
</comment>
<comment type="cofactor">
    <cofactor evidence="1">
        <name>Mg(2+)</name>
        <dbReference type="ChEBI" id="CHEBI:18420"/>
    </cofactor>
    <text evidence="1">Binds 2 Mg(2+) ion per subunit.</text>
</comment>
<comment type="subunit">
    <text evidence="1">Homodimer which binds Holliday junction (HJ) DNA. The HJ becomes 2-fold symmetrical on binding to RuvC with unstacked arms; it has a different conformation from HJ DNA in complex with RuvA. In the full resolvosome a probable DNA-RuvA(4)-RuvB(12)-RuvC(2) complex forms which resolves the HJ.</text>
</comment>
<comment type="subcellular location">
    <subcellularLocation>
        <location evidence="1">Cytoplasm</location>
    </subcellularLocation>
</comment>
<comment type="similarity">
    <text evidence="1">Belongs to the RuvC family.</text>
</comment>
<name>RUVC_AGRFC</name>